<name>Y0170_DICDI</name>
<proteinExistence type="predicted"/>
<feature type="chain" id="PRO_0000367482" description="Bromodomain-containing protein DDB_G0270170">
    <location>
        <begin position="1"/>
        <end position="1578"/>
    </location>
</feature>
<feature type="domain" description="Bromo" evidence="2">
    <location>
        <begin position="735"/>
        <end position="841"/>
    </location>
</feature>
<feature type="domain" description="NET" evidence="3">
    <location>
        <begin position="957"/>
        <end position="1039"/>
    </location>
</feature>
<feature type="region of interest" description="Disordered" evidence="4">
    <location>
        <begin position="1"/>
        <end position="39"/>
    </location>
</feature>
<feature type="region of interest" description="Disordered" evidence="4">
    <location>
        <begin position="108"/>
        <end position="127"/>
    </location>
</feature>
<feature type="region of interest" description="Disordered" evidence="4">
    <location>
        <begin position="151"/>
        <end position="285"/>
    </location>
</feature>
<feature type="region of interest" description="Disordered" evidence="4">
    <location>
        <begin position="319"/>
        <end position="454"/>
    </location>
</feature>
<feature type="region of interest" description="Disordered" evidence="4">
    <location>
        <begin position="543"/>
        <end position="565"/>
    </location>
</feature>
<feature type="region of interest" description="Disordered" evidence="4">
    <location>
        <begin position="580"/>
        <end position="730"/>
    </location>
</feature>
<feature type="region of interest" description="Disordered" evidence="4">
    <location>
        <begin position="874"/>
        <end position="969"/>
    </location>
</feature>
<feature type="region of interest" description="Disordered" evidence="4">
    <location>
        <begin position="1039"/>
        <end position="1167"/>
    </location>
</feature>
<feature type="region of interest" description="Disordered" evidence="4">
    <location>
        <begin position="1184"/>
        <end position="1452"/>
    </location>
</feature>
<feature type="region of interest" description="Disordered" evidence="4">
    <location>
        <begin position="1480"/>
        <end position="1544"/>
    </location>
</feature>
<feature type="coiled-coil region" evidence="1">
    <location>
        <begin position="479"/>
        <end position="506"/>
    </location>
</feature>
<feature type="coiled-coil region" evidence="1">
    <location>
        <begin position="851"/>
        <end position="903"/>
    </location>
</feature>
<feature type="coiled-coil region" evidence="1">
    <location>
        <begin position="1113"/>
        <end position="1150"/>
    </location>
</feature>
<feature type="coiled-coil region" evidence="1">
    <location>
        <begin position="1280"/>
        <end position="1308"/>
    </location>
</feature>
<feature type="coiled-coil region" evidence="1">
    <location>
        <begin position="1462"/>
        <end position="1544"/>
    </location>
</feature>
<feature type="compositionally biased region" description="Acidic residues" evidence="4">
    <location>
        <begin position="1"/>
        <end position="12"/>
    </location>
</feature>
<feature type="compositionally biased region" description="Low complexity" evidence="4">
    <location>
        <begin position="18"/>
        <end position="35"/>
    </location>
</feature>
<feature type="compositionally biased region" description="Basic and acidic residues" evidence="4">
    <location>
        <begin position="152"/>
        <end position="163"/>
    </location>
</feature>
<feature type="compositionally biased region" description="Low complexity" evidence="4">
    <location>
        <begin position="164"/>
        <end position="185"/>
    </location>
</feature>
<feature type="compositionally biased region" description="Low complexity" evidence="4">
    <location>
        <begin position="197"/>
        <end position="231"/>
    </location>
</feature>
<feature type="compositionally biased region" description="Polar residues" evidence="4">
    <location>
        <begin position="319"/>
        <end position="332"/>
    </location>
</feature>
<feature type="compositionally biased region" description="Polar residues" evidence="4">
    <location>
        <begin position="340"/>
        <end position="351"/>
    </location>
</feature>
<feature type="compositionally biased region" description="Low complexity" evidence="4">
    <location>
        <begin position="352"/>
        <end position="383"/>
    </location>
</feature>
<feature type="compositionally biased region" description="Polar residues" evidence="4">
    <location>
        <begin position="384"/>
        <end position="395"/>
    </location>
</feature>
<feature type="compositionally biased region" description="Low complexity" evidence="4">
    <location>
        <begin position="396"/>
        <end position="407"/>
    </location>
</feature>
<feature type="compositionally biased region" description="Low complexity" evidence="4">
    <location>
        <begin position="417"/>
        <end position="433"/>
    </location>
</feature>
<feature type="compositionally biased region" description="Polar residues" evidence="4">
    <location>
        <begin position="443"/>
        <end position="454"/>
    </location>
</feature>
<feature type="compositionally biased region" description="Low complexity" evidence="4">
    <location>
        <begin position="604"/>
        <end position="653"/>
    </location>
</feature>
<feature type="compositionally biased region" description="Low complexity" evidence="4">
    <location>
        <begin position="660"/>
        <end position="686"/>
    </location>
</feature>
<feature type="compositionally biased region" description="Low complexity" evidence="4">
    <location>
        <begin position="881"/>
        <end position="911"/>
    </location>
</feature>
<feature type="compositionally biased region" description="Low complexity" evidence="4">
    <location>
        <begin position="918"/>
        <end position="961"/>
    </location>
</feature>
<feature type="compositionally biased region" description="Low complexity" evidence="4">
    <location>
        <begin position="1047"/>
        <end position="1061"/>
    </location>
</feature>
<feature type="compositionally biased region" description="Basic and acidic residues" evidence="4">
    <location>
        <begin position="1064"/>
        <end position="1077"/>
    </location>
</feature>
<feature type="compositionally biased region" description="Basic residues" evidence="4">
    <location>
        <begin position="1092"/>
        <end position="1107"/>
    </location>
</feature>
<feature type="compositionally biased region" description="Low complexity" evidence="4">
    <location>
        <begin position="1112"/>
        <end position="1167"/>
    </location>
</feature>
<feature type="compositionally biased region" description="Acidic residues" evidence="4">
    <location>
        <begin position="1192"/>
        <end position="1204"/>
    </location>
</feature>
<feature type="compositionally biased region" description="Low complexity" evidence="4">
    <location>
        <begin position="1205"/>
        <end position="1218"/>
    </location>
</feature>
<feature type="compositionally biased region" description="Low complexity" evidence="4">
    <location>
        <begin position="1231"/>
        <end position="1334"/>
    </location>
</feature>
<feature type="compositionally biased region" description="Polar residues" evidence="4">
    <location>
        <begin position="1356"/>
        <end position="1369"/>
    </location>
</feature>
<feature type="compositionally biased region" description="Low complexity" evidence="4">
    <location>
        <begin position="1370"/>
        <end position="1386"/>
    </location>
</feature>
<feature type="compositionally biased region" description="Polar residues" evidence="4">
    <location>
        <begin position="1387"/>
        <end position="1399"/>
    </location>
</feature>
<feature type="compositionally biased region" description="Low complexity" evidence="4">
    <location>
        <begin position="1400"/>
        <end position="1424"/>
    </location>
</feature>
<feature type="compositionally biased region" description="Low complexity" evidence="4">
    <location>
        <begin position="1432"/>
        <end position="1451"/>
    </location>
</feature>
<feature type="compositionally biased region" description="Basic and acidic residues" evidence="4">
    <location>
        <begin position="1480"/>
        <end position="1538"/>
    </location>
</feature>
<reference key="1">
    <citation type="journal article" date="2005" name="Nature">
        <title>The genome of the social amoeba Dictyostelium discoideum.</title>
        <authorList>
            <person name="Eichinger L."/>
            <person name="Pachebat J.A."/>
            <person name="Gloeckner G."/>
            <person name="Rajandream M.A."/>
            <person name="Sucgang R."/>
            <person name="Berriman M."/>
            <person name="Song J."/>
            <person name="Olsen R."/>
            <person name="Szafranski K."/>
            <person name="Xu Q."/>
            <person name="Tunggal B."/>
            <person name="Kummerfeld S."/>
            <person name="Madera M."/>
            <person name="Konfortov B.A."/>
            <person name="Rivero F."/>
            <person name="Bankier A.T."/>
            <person name="Lehmann R."/>
            <person name="Hamlin N."/>
            <person name="Davies R."/>
            <person name="Gaudet P."/>
            <person name="Fey P."/>
            <person name="Pilcher K."/>
            <person name="Chen G."/>
            <person name="Saunders D."/>
            <person name="Sodergren E.J."/>
            <person name="Davis P."/>
            <person name="Kerhornou A."/>
            <person name="Nie X."/>
            <person name="Hall N."/>
            <person name="Anjard C."/>
            <person name="Hemphill L."/>
            <person name="Bason N."/>
            <person name="Farbrother P."/>
            <person name="Desany B."/>
            <person name="Just E."/>
            <person name="Morio T."/>
            <person name="Rost R."/>
            <person name="Churcher C.M."/>
            <person name="Cooper J."/>
            <person name="Haydock S."/>
            <person name="van Driessche N."/>
            <person name="Cronin A."/>
            <person name="Goodhead I."/>
            <person name="Muzny D.M."/>
            <person name="Mourier T."/>
            <person name="Pain A."/>
            <person name="Lu M."/>
            <person name="Harper D."/>
            <person name="Lindsay R."/>
            <person name="Hauser H."/>
            <person name="James K.D."/>
            <person name="Quiles M."/>
            <person name="Madan Babu M."/>
            <person name="Saito T."/>
            <person name="Buchrieser C."/>
            <person name="Wardroper A."/>
            <person name="Felder M."/>
            <person name="Thangavelu M."/>
            <person name="Johnson D."/>
            <person name="Knights A."/>
            <person name="Loulseged H."/>
            <person name="Mungall K.L."/>
            <person name="Oliver K."/>
            <person name="Price C."/>
            <person name="Quail M.A."/>
            <person name="Urushihara H."/>
            <person name="Hernandez J."/>
            <person name="Rabbinowitsch E."/>
            <person name="Steffen D."/>
            <person name="Sanders M."/>
            <person name="Ma J."/>
            <person name="Kohara Y."/>
            <person name="Sharp S."/>
            <person name="Simmonds M.N."/>
            <person name="Spiegler S."/>
            <person name="Tivey A."/>
            <person name="Sugano S."/>
            <person name="White B."/>
            <person name="Walker D."/>
            <person name="Woodward J.R."/>
            <person name="Winckler T."/>
            <person name="Tanaka Y."/>
            <person name="Shaulsky G."/>
            <person name="Schleicher M."/>
            <person name="Weinstock G.M."/>
            <person name="Rosenthal A."/>
            <person name="Cox E.C."/>
            <person name="Chisholm R.L."/>
            <person name="Gibbs R.A."/>
            <person name="Loomis W.F."/>
            <person name="Platzer M."/>
            <person name="Kay R.R."/>
            <person name="Williams J.G."/>
            <person name="Dear P.H."/>
            <person name="Noegel A.A."/>
            <person name="Barrell B.G."/>
            <person name="Kuspa A."/>
        </authorList>
    </citation>
    <scope>NUCLEOTIDE SEQUENCE [LARGE SCALE GENOMIC DNA]</scope>
    <source>
        <strain>AX4</strain>
    </source>
</reference>
<reference key="2">
    <citation type="journal article" date="2006" name="PLoS Genet.">
        <title>The dictyostelium kinome -- analysis of the protein kinases from a simple model organism.</title>
        <authorList>
            <person name="Goldberg J.M."/>
            <person name="Manning G."/>
            <person name="Liu A."/>
            <person name="Fey P."/>
            <person name="Pilcher K.E."/>
            <person name="Xu Y."/>
            <person name="Smith J.L."/>
        </authorList>
    </citation>
    <scope>GENE FAMILY</scope>
    <scope>NOMENCLATURE</scope>
</reference>
<sequence>MSLEQQDETVVEEETKTSFETNNSTANNTNNNTDNTYKEEILKSTESITRNDDKVDPTSATALEKDIINNGEYSGSSSSSGNNNINGSNNIKNIVIEKVEQLERVVVNNNNGDENNKDIHDSSNNTEDIDISKSHIIKYDKDEMSTISTIHYSDDESSKEKQDNINSNNNNNKNKNEQIINSENILDTPMTEASDQTTPSDTPPTLTNNTSSTTTTTTTNNTTTAATTTTNSRRKRNSLSTPSSEMDPVLDSTSENNTTRKTRGSRNSKKEPEELLLTPEQAKELSNKSKKWIYVPIIEAEAKKEEVLPAKRDRKQVFNENIFSSSRKSTTKGGEKKNDTASTTNTPIITAQQNTTPLSPTQTTTTTTTPTTTTAQQNTPAQTESKPPTTISINIKGSKSPKTTGGKQQKPTPPSPVVISQPVVPSTPVVATTKKTNSRSKRSTANNNSETTQTPEVVISAPTTTTAAITTPINITPSSDSATIQQLQQSISMLEDKIRLISSNNKVATEILNNTITTTTTTAATSAIKDEEIIENTELQTTFTKSSTLAPPSSERKYSNLYSDDEDDTEMVDVSVSIPIPIPIPTPTQTTTKKTTLSKKRKSNTSTIIPTTTIQQEQGQEQGQQQPPQQQQPPQQQQPPQQQQPPQQQPPQQSTSPSKTQQENTSSTTTTTTTTTTTTNTEDTTTVIDKKPKKKPRHSAPLIPQIKPRLPLNGGSSERAQRSSRGRMGKAMRDVVLTPVFKRCLDLLEELFEHQHSPPFLVAVDPYALGILDYFDVIKHPMDLGTIKASLIGGGYDTIDKFAEDCRLVFSNAKTYNPSTNPVHIMAQSLEDVFEKGFPKVLIEPPSPPPKNVDQEKIEKLSNDLKNVTKELEKFKKDDSNSINNNNNNNNNYNNNNNNNNNNSSSSSSRSSSRKSHSSGSSSSHRSGSSRSSRGSSSSSSSSSSSSSSSSSSSSSSSSNNKKYPKVTTEEKTKLGAEITQLPVDLLPSILQIIHNTNSLPEQKPGSEVVIDLMKFDDDILRRLSKFVEQYKNGEIPQHALPLSAPSSTHSSHSSSHDSSSNIREIEKLQKQLDRLGKGQQNSSSSSSSSSHSKRISKPISKARGRKVISTSSSNLNNSSNNINNNNNNINNYNNNNNYNNNNNNNLNNNNNNNINSNLNNNLNNNNNKDDIVIDGFKKENFSSIPEKDVETDISESSDSESDSESGSSDSSSSYSDSDFSDSDNDRRRNYNNSYNNNNNNNNNNNSSNNFNNQNNSYNNSNNNNNNNSSNNNNNNNNNNSNNNNSNNNNNNVNNNNNNHNNNNHNNNINNNNNNINNNTTQPSPSQQSTSLTNEPIKPPTILQTVKKPALPVTGSVASWSFDPTNNKESSSSSSTSSTSSTSNTTLTPIIQQSSLTHASSPISSSTFVSFSSSSSTPPTNNLSPPSPGLPNSPSINSPSSPSANNNNTDSAWNHFKAKNITLKQKEKERVLQEEVLRKEREEKEEELKKEEEKKRIEMEEIKRLAKEKEEREAEETRKQIESERAAAREAREKEKLNNSKGNMSFQYQMDVMASFEDNIDSSGSLLNLQLKPIEDPL</sequence>
<protein>
    <recommendedName>
        <fullName>Bromodomain-containing protein DDB_G0270170</fullName>
    </recommendedName>
</protein>
<evidence type="ECO:0000255" key="1"/>
<evidence type="ECO:0000255" key="2">
    <source>
        <dbReference type="PROSITE-ProRule" id="PRU00035"/>
    </source>
</evidence>
<evidence type="ECO:0000255" key="3">
    <source>
        <dbReference type="PROSITE-ProRule" id="PRU00857"/>
    </source>
</evidence>
<evidence type="ECO:0000256" key="4">
    <source>
        <dbReference type="SAM" id="MobiDB-lite"/>
    </source>
</evidence>
<gene>
    <name type="ORF">DDB_G0270170</name>
</gene>
<organism>
    <name type="scientific">Dictyostelium discoideum</name>
    <name type="common">Social amoeba</name>
    <dbReference type="NCBI Taxonomy" id="44689"/>
    <lineage>
        <taxon>Eukaryota</taxon>
        <taxon>Amoebozoa</taxon>
        <taxon>Evosea</taxon>
        <taxon>Eumycetozoa</taxon>
        <taxon>Dictyostelia</taxon>
        <taxon>Dictyosteliales</taxon>
        <taxon>Dictyosteliaceae</taxon>
        <taxon>Dictyostelium</taxon>
    </lineage>
</organism>
<accession>Q55C84</accession>
<dbReference type="EMBL" id="AAFI02000005">
    <property type="protein sequence ID" value="EAL72435.1"/>
    <property type="molecule type" value="Genomic_DNA"/>
</dbReference>
<dbReference type="RefSeq" id="XP_646597.1">
    <property type="nucleotide sequence ID" value="XM_641505.1"/>
</dbReference>
<dbReference type="SMR" id="Q55C84"/>
<dbReference type="FunCoup" id="Q55C84">
    <property type="interactions" value="452"/>
</dbReference>
<dbReference type="STRING" id="44689.Q55C84"/>
<dbReference type="GlyGen" id="Q55C84">
    <property type="glycosylation" value="2 sites"/>
</dbReference>
<dbReference type="PaxDb" id="44689-DDB0220693"/>
<dbReference type="EnsemblProtists" id="EAL72435">
    <property type="protein sequence ID" value="EAL72435"/>
    <property type="gene ID" value="DDB_G0270170"/>
</dbReference>
<dbReference type="GeneID" id="8617568"/>
<dbReference type="KEGG" id="ddi:DDB_G0270170"/>
<dbReference type="dictyBase" id="DDB_G0270170"/>
<dbReference type="VEuPathDB" id="AmoebaDB:DDB_G0270170"/>
<dbReference type="eggNOG" id="KOG1474">
    <property type="taxonomic scope" value="Eukaryota"/>
</dbReference>
<dbReference type="HOGENOM" id="CLU_245222_0_0_1"/>
<dbReference type="InParanoid" id="Q55C84"/>
<dbReference type="OMA" id="MSFQYQM"/>
<dbReference type="PRO" id="PR:Q55C84"/>
<dbReference type="Proteomes" id="UP000002195">
    <property type="component" value="Chromosome 1"/>
</dbReference>
<dbReference type="GO" id="GO:0000785">
    <property type="term" value="C:chromatin"/>
    <property type="evidence" value="ECO:0000318"/>
    <property type="project" value="GO_Central"/>
</dbReference>
<dbReference type="GO" id="GO:0005634">
    <property type="term" value="C:nucleus"/>
    <property type="evidence" value="ECO:0000318"/>
    <property type="project" value="GO_Central"/>
</dbReference>
<dbReference type="GO" id="GO:0070577">
    <property type="term" value="F:lysine-acetylated histone binding"/>
    <property type="evidence" value="ECO:0000318"/>
    <property type="project" value="GO_Central"/>
</dbReference>
<dbReference type="GO" id="GO:0006338">
    <property type="term" value="P:chromatin remodeling"/>
    <property type="evidence" value="ECO:0000318"/>
    <property type="project" value="GO_Central"/>
</dbReference>
<dbReference type="GO" id="GO:0006355">
    <property type="term" value="P:regulation of DNA-templated transcription"/>
    <property type="evidence" value="ECO:0000318"/>
    <property type="project" value="GO_Central"/>
</dbReference>
<dbReference type="Gene3D" id="1.20.1270.220">
    <property type="match status" value="1"/>
</dbReference>
<dbReference type="Gene3D" id="1.20.920.10">
    <property type="entry name" value="Bromodomain-like"/>
    <property type="match status" value="1"/>
</dbReference>
<dbReference type="InterPro" id="IPR050935">
    <property type="entry name" value="Bromo_chromatin_reader"/>
</dbReference>
<dbReference type="InterPro" id="IPR001487">
    <property type="entry name" value="Bromodomain"/>
</dbReference>
<dbReference type="InterPro" id="IPR036427">
    <property type="entry name" value="Bromodomain-like_sf"/>
</dbReference>
<dbReference type="InterPro" id="IPR018359">
    <property type="entry name" value="Bromodomain_CS"/>
</dbReference>
<dbReference type="InterPro" id="IPR027353">
    <property type="entry name" value="NET_dom"/>
</dbReference>
<dbReference type="InterPro" id="IPR038336">
    <property type="entry name" value="NET_sf"/>
</dbReference>
<dbReference type="PANTHER" id="PTHR22880:SF225">
    <property type="entry name" value="BROMODOMAIN-CONTAINING PROTEIN BET-1-RELATED"/>
    <property type="match status" value="1"/>
</dbReference>
<dbReference type="PANTHER" id="PTHR22880">
    <property type="entry name" value="FALZ-RELATED BROMODOMAIN-CONTAINING PROTEINS"/>
    <property type="match status" value="1"/>
</dbReference>
<dbReference type="Pfam" id="PF17035">
    <property type="entry name" value="BET"/>
    <property type="match status" value="1"/>
</dbReference>
<dbReference type="Pfam" id="PF00439">
    <property type="entry name" value="Bromodomain"/>
    <property type="match status" value="1"/>
</dbReference>
<dbReference type="PRINTS" id="PR00503">
    <property type="entry name" value="BROMODOMAIN"/>
</dbReference>
<dbReference type="SMART" id="SM00297">
    <property type="entry name" value="BROMO"/>
    <property type="match status" value="1"/>
</dbReference>
<dbReference type="SUPFAM" id="SSF47370">
    <property type="entry name" value="Bromodomain"/>
    <property type="match status" value="1"/>
</dbReference>
<dbReference type="PROSITE" id="PS00633">
    <property type="entry name" value="BROMODOMAIN_1"/>
    <property type="match status" value="1"/>
</dbReference>
<dbReference type="PROSITE" id="PS50014">
    <property type="entry name" value="BROMODOMAIN_2"/>
    <property type="match status" value="1"/>
</dbReference>
<dbReference type="PROSITE" id="PS51525">
    <property type="entry name" value="NET"/>
    <property type="match status" value="1"/>
</dbReference>
<keyword id="KW-0103">Bromodomain</keyword>
<keyword id="KW-0175">Coiled coil</keyword>
<keyword id="KW-1185">Reference proteome</keyword>